<dbReference type="EMBL" id="LT708304">
    <property type="protein sequence ID" value="SIT99591.1"/>
    <property type="molecule type" value="Genomic_DNA"/>
</dbReference>
<dbReference type="RefSeq" id="NP_854649.1">
    <property type="nucleotide sequence ID" value="NC_002945.3"/>
</dbReference>
<dbReference type="RefSeq" id="WP_003404935.1">
    <property type="nucleotide sequence ID" value="NC_002945.4"/>
</dbReference>
<dbReference type="SMR" id="Q7U0Y5"/>
<dbReference type="KEGG" id="mbo:BQ2027_MB0992"/>
<dbReference type="PATRIC" id="fig|233413.5.peg.1081"/>
<dbReference type="Proteomes" id="UP000001419">
    <property type="component" value="Chromosome"/>
</dbReference>
<dbReference type="GO" id="GO:0005737">
    <property type="term" value="C:cytoplasm"/>
    <property type="evidence" value="ECO:0007669"/>
    <property type="project" value="UniProtKB-SubCell"/>
</dbReference>
<dbReference type="GO" id="GO:0003677">
    <property type="term" value="F:DNA binding"/>
    <property type="evidence" value="ECO:0007669"/>
    <property type="project" value="UniProtKB-KW"/>
</dbReference>
<dbReference type="GO" id="GO:0046872">
    <property type="term" value="F:metal ion binding"/>
    <property type="evidence" value="ECO:0007669"/>
    <property type="project" value="UniProtKB-KW"/>
</dbReference>
<dbReference type="GO" id="GO:0045892">
    <property type="term" value="P:negative regulation of DNA-templated transcription"/>
    <property type="evidence" value="ECO:0007669"/>
    <property type="project" value="UniProtKB-ARBA"/>
</dbReference>
<dbReference type="CDD" id="cd10151">
    <property type="entry name" value="TthCsoR-like_DUF156"/>
    <property type="match status" value="1"/>
</dbReference>
<dbReference type="FunFam" id="1.20.58.1000:FF:000004">
    <property type="entry name" value="Copper-sensing transcriptional repressor CsoR"/>
    <property type="match status" value="1"/>
</dbReference>
<dbReference type="Gene3D" id="1.20.58.1000">
    <property type="entry name" value="Metal-sensitive repressor, helix protomer"/>
    <property type="match status" value="1"/>
</dbReference>
<dbReference type="InterPro" id="IPR003735">
    <property type="entry name" value="Metal_Tscrpt_repr"/>
</dbReference>
<dbReference type="InterPro" id="IPR038390">
    <property type="entry name" value="Metal_Tscrpt_repr_sf"/>
</dbReference>
<dbReference type="PANTHER" id="PTHR33677:SF4">
    <property type="entry name" value="COPPER-SENSING TRANSCRIPTIONAL REPRESSOR CSOR"/>
    <property type="match status" value="1"/>
</dbReference>
<dbReference type="PANTHER" id="PTHR33677">
    <property type="entry name" value="TRANSCRIPTIONAL REPRESSOR FRMR-RELATED"/>
    <property type="match status" value="1"/>
</dbReference>
<dbReference type="Pfam" id="PF02583">
    <property type="entry name" value="Trns_repr_metal"/>
    <property type="match status" value="1"/>
</dbReference>
<accession>Q7U0Y5</accession>
<accession>A0A1R3XWY9</accession>
<accession>X2BGF2</accession>
<keyword id="KW-0186">Copper</keyword>
<keyword id="KW-0963">Cytoplasm</keyword>
<keyword id="KW-0238">DNA-binding</keyword>
<keyword id="KW-0479">Metal-binding</keyword>
<keyword id="KW-1185">Reference proteome</keyword>
<keyword id="KW-0678">Repressor</keyword>
<keyword id="KW-0804">Transcription</keyword>
<keyword id="KW-0805">Transcription regulation</keyword>
<proteinExistence type="inferred from homology"/>
<sequence length="119" mass="12800">MSKELTAKKRAALNRLKTVRGHLDGIVRMLESDAYCVDVMKQISAVQSSLERANRVMLHNHLETCFSTAVLDGHGQAAIEELIDAVKFTPALTGPHARLGGAAVGESATEEPMPDASNM</sequence>
<comment type="function">
    <text evidence="1">Copper-sensitive repressor that has a key role in copper homeostasis. It is part of the cso operon involved in the cellular response to increasing concentrations of copper inside the bacterium, which can be highly toxic. In the presence of copper, CsoR fully dissociates from the promoter in the cso operon, leading to the transcription of its genes. Binds to a GC-rich pseudopallindromic sequence, 5'-GTAGCCCACCCCCAGTGGGGTGGGA-3', in the cso promoter region (By similarity).</text>
</comment>
<comment type="subunit">
    <text evidence="1">Homodimer.</text>
</comment>
<comment type="subcellular location">
    <subcellularLocation>
        <location evidence="1">Cytoplasm</location>
    </subcellularLocation>
</comment>
<comment type="domain">
    <text evidence="1">This protein has an antiparallel four-helix bundle architecture that represents a novel DNA-binding fold.</text>
</comment>
<comment type="similarity">
    <text evidence="3">Belongs to the CsoR family.</text>
</comment>
<organism>
    <name type="scientific">Mycobacterium bovis (strain ATCC BAA-935 / AF2122/97)</name>
    <dbReference type="NCBI Taxonomy" id="233413"/>
    <lineage>
        <taxon>Bacteria</taxon>
        <taxon>Bacillati</taxon>
        <taxon>Actinomycetota</taxon>
        <taxon>Actinomycetes</taxon>
        <taxon>Mycobacteriales</taxon>
        <taxon>Mycobacteriaceae</taxon>
        <taxon>Mycobacterium</taxon>
        <taxon>Mycobacterium tuberculosis complex</taxon>
    </lineage>
</organism>
<name>CSOR_MYCBO</name>
<feature type="chain" id="PRO_0000295579" description="Copper-sensing transcriptional repressor CsoR">
    <location>
        <begin position="1"/>
        <end position="119"/>
    </location>
</feature>
<feature type="region of interest" description="Disordered" evidence="2">
    <location>
        <begin position="99"/>
        <end position="119"/>
    </location>
</feature>
<feature type="binding site" description="in other chain" evidence="1">
    <location>
        <position position="36"/>
    </location>
    <ligand>
        <name>Cu cation</name>
        <dbReference type="ChEBI" id="CHEBI:23378"/>
        <note>ligand shared between dimeric partners</note>
    </ligand>
</feature>
<feature type="binding site" evidence="1">
    <location>
        <position position="61"/>
    </location>
    <ligand>
        <name>Cu cation</name>
        <dbReference type="ChEBI" id="CHEBI:23378"/>
        <note>ligand shared between dimeric partners</note>
    </ligand>
</feature>
<feature type="binding site" evidence="1">
    <location>
        <position position="65"/>
    </location>
    <ligand>
        <name>Cu cation</name>
        <dbReference type="ChEBI" id="CHEBI:23378"/>
        <note>ligand shared between dimeric partners</note>
    </ligand>
</feature>
<protein>
    <recommendedName>
        <fullName>Copper-sensing transcriptional repressor CsoR</fullName>
    </recommendedName>
    <alternativeName>
        <fullName>Copper-sensitive operon repressor</fullName>
    </alternativeName>
</protein>
<evidence type="ECO:0000250" key="1"/>
<evidence type="ECO:0000256" key="2">
    <source>
        <dbReference type="SAM" id="MobiDB-lite"/>
    </source>
</evidence>
<evidence type="ECO:0000305" key="3"/>
<gene>
    <name type="primary">csoR</name>
    <name type="ordered locus">BQ2027_MB0992</name>
</gene>
<reference key="1">
    <citation type="journal article" date="2003" name="Proc. Natl. Acad. Sci. U.S.A.">
        <title>The complete genome sequence of Mycobacterium bovis.</title>
        <authorList>
            <person name="Garnier T."/>
            <person name="Eiglmeier K."/>
            <person name="Camus J.-C."/>
            <person name="Medina N."/>
            <person name="Mansoor H."/>
            <person name="Pryor M."/>
            <person name="Duthoy S."/>
            <person name="Grondin S."/>
            <person name="Lacroix C."/>
            <person name="Monsempe C."/>
            <person name="Simon S."/>
            <person name="Harris B."/>
            <person name="Atkin R."/>
            <person name="Doggett J."/>
            <person name="Mayes R."/>
            <person name="Keating L."/>
            <person name="Wheeler P.R."/>
            <person name="Parkhill J."/>
            <person name="Barrell B.G."/>
            <person name="Cole S.T."/>
            <person name="Gordon S.V."/>
            <person name="Hewinson R.G."/>
        </authorList>
    </citation>
    <scope>NUCLEOTIDE SEQUENCE [LARGE SCALE GENOMIC DNA]</scope>
    <source>
        <strain>ATCC BAA-935 / AF2122/97</strain>
    </source>
</reference>
<reference key="2">
    <citation type="journal article" date="2017" name="Genome Announc.">
        <title>Updated reference genome sequence and annotation of Mycobacterium bovis AF2122/97.</title>
        <authorList>
            <person name="Malone K.M."/>
            <person name="Farrell D."/>
            <person name="Stuber T.P."/>
            <person name="Schubert O.T."/>
            <person name="Aebersold R."/>
            <person name="Robbe-Austerman S."/>
            <person name="Gordon S.V."/>
        </authorList>
    </citation>
    <scope>NUCLEOTIDE SEQUENCE [LARGE SCALE GENOMIC DNA]</scope>
    <scope>GENOME REANNOTATION</scope>
    <source>
        <strain>ATCC BAA-935 / AF2122/97</strain>
    </source>
</reference>